<keyword id="KW-0967">Endosome</keyword>
<keyword id="KW-0458">Lysosome</keyword>
<keyword id="KW-0472">Membrane</keyword>
<keyword id="KW-1267">Proteomics identification</keyword>
<keyword id="KW-0675">Receptor</keyword>
<keyword id="KW-1185">Reference proteome</keyword>
<keyword id="KW-0812">Transmembrane</keyword>
<keyword id="KW-1133">Transmembrane helix</keyword>
<feature type="chain" id="PRO_0000218854" description="Monocyte to macrophage differentiation factor">
    <location>
        <begin position="1"/>
        <end position="238"/>
    </location>
</feature>
<feature type="topological domain" description="Cytoplasmic" evidence="2">
    <location>
        <begin position="1"/>
        <end position="28"/>
    </location>
</feature>
<feature type="transmembrane region" description="Helical" evidence="2">
    <location>
        <begin position="29"/>
        <end position="49"/>
    </location>
</feature>
<feature type="topological domain" description="Lumenal" evidence="2">
    <location>
        <begin position="50"/>
        <end position="61"/>
    </location>
</feature>
<feature type="transmembrane region" description="Helical" evidence="2">
    <location>
        <begin position="62"/>
        <end position="82"/>
    </location>
</feature>
<feature type="topological domain" description="Cytoplasmic" evidence="2">
    <location>
        <begin position="83"/>
        <end position="101"/>
    </location>
</feature>
<feature type="transmembrane region" description="Helical" evidence="2">
    <location>
        <begin position="102"/>
        <end position="122"/>
    </location>
</feature>
<feature type="topological domain" description="Lumenal" evidence="2">
    <location>
        <begin position="123"/>
        <end position="124"/>
    </location>
</feature>
<feature type="transmembrane region" description="Helical" evidence="2">
    <location>
        <begin position="125"/>
        <end position="145"/>
    </location>
</feature>
<feature type="topological domain" description="Cytoplasmic" evidence="2">
    <location>
        <begin position="146"/>
        <end position="151"/>
    </location>
</feature>
<feature type="transmembrane region" description="Helical" evidence="2">
    <location>
        <begin position="152"/>
        <end position="172"/>
    </location>
</feature>
<feature type="topological domain" description="Lumenal" evidence="2">
    <location>
        <begin position="173"/>
        <end position="174"/>
    </location>
</feature>
<feature type="transmembrane region" description="Helical" evidence="2">
    <location>
        <begin position="175"/>
        <end position="195"/>
    </location>
</feature>
<feature type="topological domain" description="Cytoplasmic" evidence="2">
    <location>
        <begin position="196"/>
        <end position="198"/>
    </location>
</feature>
<feature type="transmembrane region" description="Helical" evidence="2">
    <location>
        <begin position="199"/>
        <end position="219"/>
    </location>
</feature>
<feature type="topological domain" description="Lumenal" evidence="2">
    <location>
        <begin position="220"/>
        <end position="238"/>
    </location>
</feature>
<feature type="sequence conflict" description="In Ref. 1; CAA59752." evidence="6" ref="1">
    <original>V</original>
    <variation>A</variation>
    <location>
        <position position="75"/>
    </location>
</feature>
<feature type="sequence conflict" description="In Ref. 1; CAA59752." evidence="6" ref="1">
    <original>V</original>
    <variation>A</variation>
    <location>
        <position position="92"/>
    </location>
</feature>
<evidence type="ECO:0000250" key="1"/>
<evidence type="ECO:0000255" key="2"/>
<evidence type="ECO:0000269" key="3">
    <source>
    </source>
</evidence>
<evidence type="ECO:0000303" key="4">
    <source>
    </source>
</evidence>
<evidence type="ECO:0000303" key="5">
    <source>
    </source>
</evidence>
<evidence type="ECO:0000305" key="6"/>
<evidence type="ECO:0000312" key="7">
    <source>
        <dbReference type="HGNC" id="HGNC:7153"/>
    </source>
</evidence>
<gene>
    <name evidence="7" type="primary">MMD</name>
    <name evidence="4" type="synonym">PAQR11</name>
</gene>
<organism>
    <name type="scientific">Homo sapiens</name>
    <name type="common">Human</name>
    <dbReference type="NCBI Taxonomy" id="9606"/>
    <lineage>
        <taxon>Eukaryota</taxon>
        <taxon>Metazoa</taxon>
        <taxon>Chordata</taxon>
        <taxon>Craniata</taxon>
        <taxon>Vertebrata</taxon>
        <taxon>Euteleostomi</taxon>
        <taxon>Mammalia</taxon>
        <taxon>Eutheria</taxon>
        <taxon>Euarchontoglires</taxon>
        <taxon>Primates</taxon>
        <taxon>Haplorrhini</taxon>
        <taxon>Catarrhini</taxon>
        <taxon>Hominidae</taxon>
        <taxon>Homo</taxon>
    </lineage>
</organism>
<reference key="1">
    <citation type="journal article" date="1995" name="Biochem. Biophys. Res. Commun.">
        <title>Molecular cloning of a novel macrophage maturation-associated transcript encoding a protein with several potential transmembrane domains.</title>
        <authorList>
            <person name="Rehli M."/>
            <person name="Krause S.W."/>
            <person name="Schwarzfischer L."/>
            <person name="Kreutz M."/>
            <person name="Andreesen R."/>
        </authorList>
    </citation>
    <scope>NUCLEOTIDE SEQUENCE [MRNA]</scope>
    <source>
        <tissue>Blood</tissue>
    </source>
</reference>
<reference key="2">
    <citation type="journal article" date="2005" name="J. Mol. Evol.">
        <title>PAQR proteins: a novel membrane receptor family defined by an ancient 7-transmembrane pass motif.</title>
        <authorList>
            <person name="Tang Y.T."/>
            <person name="Hu T."/>
            <person name="Arterburn M."/>
            <person name="Boyle B."/>
            <person name="Bright J.M."/>
            <person name="Emtage P.C."/>
            <person name="Funk W.D."/>
        </authorList>
    </citation>
    <scope>NUCLEOTIDE SEQUENCE [MRNA]</scope>
    <scope>TISSUE SPECIFICITY</scope>
</reference>
<reference key="3">
    <citation type="submission" date="2004-06" db="EMBL/GenBank/DDBJ databases">
        <title>Cloning of human full open reading frames in Gateway(TM) system entry vector (pDONR201).</title>
        <authorList>
            <person name="Halleck A."/>
            <person name="Ebert L."/>
            <person name="Mkoundinya M."/>
            <person name="Schick M."/>
            <person name="Eisenstein S."/>
            <person name="Neubert P."/>
            <person name="Kstrang K."/>
            <person name="Schatten R."/>
            <person name="Shen B."/>
            <person name="Henze S."/>
            <person name="Mar W."/>
            <person name="Korn B."/>
            <person name="Zuo D."/>
            <person name="Hu Y."/>
            <person name="LaBaer J."/>
        </authorList>
    </citation>
    <scope>NUCLEOTIDE SEQUENCE [LARGE SCALE MRNA]</scope>
</reference>
<reference key="4">
    <citation type="journal article" date="2004" name="Nat. Genet.">
        <title>Complete sequencing and characterization of 21,243 full-length human cDNAs.</title>
        <authorList>
            <person name="Ota T."/>
            <person name="Suzuki Y."/>
            <person name="Nishikawa T."/>
            <person name="Otsuki T."/>
            <person name="Sugiyama T."/>
            <person name="Irie R."/>
            <person name="Wakamatsu A."/>
            <person name="Hayashi K."/>
            <person name="Sato H."/>
            <person name="Nagai K."/>
            <person name="Kimura K."/>
            <person name="Makita H."/>
            <person name="Sekine M."/>
            <person name="Obayashi M."/>
            <person name="Nishi T."/>
            <person name="Shibahara T."/>
            <person name="Tanaka T."/>
            <person name="Ishii S."/>
            <person name="Yamamoto J."/>
            <person name="Saito K."/>
            <person name="Kawai Y."/>
            <person name="Isono Y."/>
            <person name="Nakamura Y."/>
            <person name="Nagahari K."/>
            <person name="Murakami K."/>
            <person name="Yasuda T."/>
            <person name="Iwayanagi T."/>
            <person name="Wagatsuma M."/>
            <person name="Shiratori A."/>
            <person name="Sudo H."/>
            <person name="Hosoiri T."/>
            <person name="Kaku Y."/>
            <person name="Kodaira H."/>
            <person name="Kondo H."/>
            <person name="Sugawara M."/>
            <person name="Takahashi M."/>
            <person name="Kanda K."/>
            <person name="Yokoi T."/>
            <person name="Furuya T."/>
            <person name="Kikkawa E."/>
            <person name="Omura Y."/>
            <person name="Abe K."/>
            <person name="Kamihara K."/>
            <person name="Katsuta N."/>
            <person name="Sato K."/>
            <person name="Tanikawa M."/>
            <person name="Yamazaki M."/>
            <person name="Ninomiya K."/>
            <person name="Ishibashi T."/>
            <person name="Yamashita H."/>
            <person name="Murakawa K."/>
            <person name="Fujimori K."/>
            <person name="Tanai H."/>
            <person name="Kimata M."/>
            <person name="Watanabe M."/>
            <person name="Hiraoka S."/>
            <person name="Chiba Y."/>
            <person name="Ishida S."/>
            <person name="Ono Y."/>
            <person name="Takiguchi S."/>
            <person name="Watanabe S."/>
            <person name="Yosida M."/>
            <person name="Hotuta T."/>
            <person name="Kusano J."/>
            <person name="Kanehori K."/>
            <person name="Takahashi-Fujii A."/>
            <person name="Hara H."/>
            <person name="Tanase T.-O."/>
            <person name="Nomura Y."/>
            <person name="Togiya S."/>
            <person name="Komai F."/>
            <person name="Hara R."/>
            <person name="Takeuchi K."/>
            <person name="Arita M."/>
            <person name="Imose N."/>
            <person name="Musashino K."/>
            <person name="Yuuki H."/>
            <person name="Oshima A."/>
            <person name="Sasaki N."/>
            <person name="Aotsuka S."/>
            <person name="Yoshikawa Y."/>
            <person name="Matsunawa H."/>
            <person name="Ichihara T."/>
            <person name="Shiohata N."/>
            <person name="Sano S."/>
            <person name="Moriya S."/>
            <person name="Momiyama H."/>
            <person name="Satoh N."/>
            <person name="Takami S."/>
            <person name="Terashima Y."/>
            <person name="Suzuki O."/>
            <person name="Nakagawa S."/>
            <person name="Senoh A."/>
            <person name="Mizoguchi H."/>
            <person name="Goto Y."/>
            <person name="Shimizu F."/>
            <person name="Wakebe H."/>
            <person name="Hishigaki H."/>
            <person name="Watanabe T."/>
            <person name="Sugiyama A."/>
            <person name="Takemoto M."/>
            <person name="Kawakami B."/>
            <person name="Yamazaki M."/>
            <person name="Watanabe K."/>
            <person name="Kumagai A."/>
            <person name="Itakura S."/>
            <person name="Fukuzumi Y."/>
            <person name="Fujimori Y."/>
            <person name="Komiyama M."/>
            <person name="Tashiro H."/>
            <person name="Tanigami A."/>
            <person name="Fujiwara T."/>
            <person name="Ono T."/>
            <person name="Yamada K."/>
            <person name="Fujii Y."/>
            <person name="Ozaki K."/>
            <person name="Hirao M."/>
            <person name="Ohmori Y."/>
            <person name="Kawabata A."/>
            <person name="Hikiji T."/>
            <person name="Kobatake N."/>
            <person name="Inagaki H."/>
            <person name="Ikema Y."/>
            <person name="Okamoto S."/>
            <person name="Okitani R."/>
            <person name="Kawakami T."/>
            <person name="Noguchi S."/>
            <person name="Itoh T."/>
            <person name="Shigeta K."/>
            <person name="Senba T."/>
            <person name="Matsumura K."/>
            <person name="Nakajima Y."/>
            <person name="Mizuno T."/>
            <person name="Morinaga M."/>
            <person name="Sasaki M."/>
            <person name="Togashi T."/>
            <person name="Oyama M."/>
            <person name="Hata H."/>
            <person name="Watanabe M."/>
            <person name="Komatsu T."/>
            <person name="Mizushima-Sugano J."/>
            <person name="Satoh T."/>
            <person name="Shirai Y."/>
            <person name="Takahashi Y."/>
            <person name="Nakagawa K."/>
            <person name="Okumura K."/>
            <person name="Nagase T."/>
            <person name="Nomura N."/>
            <person name="Kikuchi H."/>
            <person name="Masuho Y."/>
            <person name="Yamashita R."/>
            <person name="Nakai K."/>
            <person name="Yada T."/>
            <person name="Nakamura Y."/>
            <person name="Ohara O."/>
            <person name="Isogai T."/>
            <person name="Sugano S."/>
        </authorList>
    </citation>
    <scope>NUCLEOTIDE SEQUENCE [LARGE SCALE MRNA]</scope>
    <source>
        <tissue>Spleen</tissue>
    </source>
</reference>
<reference key="5">
    <citation type="submission" date="2005-09" db="EMBL/GenBank/DDBJ databases">
        <authorList>
            <person name="Mural R.J."/>
            <person name="Istrail S."/>
            <person name="Sutton G.G."/>
            <person name="Florea L."/>
            <person name="Halpern A.L."/>
            <person name="Mobarry C.M."/>
            <person name="Lippert R."/>
            <person name="Walenz B."/>
            <person name="Shatkay H."/>
            <person name="Dew I."/>
            <person name="Miller J.R."/>
            <person name="Flanigan M.J."/>
            <person name="Edwards N.J."/>
            <person name="Bolanos R."/>
            <person name="Fasulo D."/>
            <person name="Halldorsson B.V."/>
            <person name="Hannenhalli S."/>
            <person name="Turner R."/>
            <person name="Yooseph S."/>
            <person name="Lu F."/>
            <person name="Nusskern D.R."/>
            <person name="Shue B.C."/>
            <person name="Zheng X.H."/>
            <person name="Zhong F."/>
            <person name="Delcher A.L."/>
            <person name="Huson D.H."/>
            <person name="Kravitz S.A."/>
            <person name="Mouchard L."/>
            <person name="Reinert K."/>
            <person name="Remington K.A."/>
            <person name="Clark A.G."/>
            <person name="Waterman M.S."/>
            <person name="Eichler E.E."/>
            <person name="Adams M.D."/>
            <person name="Hunkapiller M.W."/>
            <person name="Myers E.W."/>
            <person name="Venter J.C."/>
        </authorList>
    </citation>
    <scope>NUCLEOTIDE SEQUENCE [LARGE SCALE GENOMIC DNA]</scope>
</reference>
<reference key="6">
    <citation type="journal article" date="2004" name="Genome Res.">
        <title>The status, quality, and expansion of the NIH full-length cDNA project: the Mammalian Gene Collection (MGC).</title>
        <authorList>
            <consortium name="The MGC Project Team"/>
        </authorList>
    </citation>
    <scope>NUCLEOTIDE SEQUENCE [LARGE SCALE MRNA]</scope>
    <source>
        <tissue>Brain</tissue>
    </source>
</reference>
<dbReference type="EMBL" id="X85750">
    <property type="protein sequence ID" value="CAA59752.1"/>
    <property type="molecule type" value="mRNA"/>
</dbReference>
<dbReference type="EMBL" id="AY424289">
    <property type="protein sequence ID" value="AAR08377.1"/>
    <property type="molecule type" value="mRNA"/>
</dbReference>
<dbReference type="EMBL" id="CR541893">
    <property type="protein sequence ID" value="CAG46691.1"/>
    <property type="molecule type" value="mRNA"/>
</dbReference>
<dbReference type="EMBL" id="AK312760">
    <property type="protein sequence ID" value="BAG35626.1"/>
    <property type="molecule type" value="mRNA"/>
</dbReference>
<dbReference type="EMBL" id="CH471109">
    <property type="protein sequence ID" value="EAW94541.1"/>
    <property type="molecule type" value="Genomic_DNA"/>
</dbReference>
<dbReference type="EMBL" id="CH471109">
    <property type="protein sequence ID" value="EAW94542.1"/>
    <property type="molecule type" value="Genomic_DNA"/>
</dbReference>
<dbReference type="EMBL" id="BC026324">
    <property type="protein sequence ID" value="AAH26324.1"/>
    <property type="molecule type" value="mRNA"/>
</dbReference>
<dbReference type="CCDS" id="CCDS11586.1"/>
<dbReference type="PIR" id="JC4503">
    <property type="entry name" value="JC4503"/>
</dbReference>
<dbReference type="RefSeq" id="NP_036461.2">
    <property type="nucleotide sequence ID" value="NM_012329.2"/>
</dbReference>
<dbReference type="SMR" id="Q15546"/>
<dbReference type="BioGRID" id="117077">
    <property type="interactions" value="24"/>
</dbReference>
<dbReference type="FunCoup" id="Q15546">
    <property type="interactions" value="694"/>
</dbReference>
<dbReference type="IntAct" id="Q15546">
    <property type="interactions" value="19"/>
</dbReference>
<dbReference type="STRING" id="9606.ENSP00000262065"/>
<dbReference type="TCDB" id="1.C.113.2.1">
    <property type="family name" value="the hemolysin iii (hly iii) family"/>
</dbReference>
<dbReference type="iPTMnet" id="Q15546"/>
<dbReference type="PhosphoSitePlus" id="Q15546"/>
<dbReference type="BioMuta" id="MMD"/>
<dbReference type="DMDM" id="62512174"/>
<dbReference type="MassIVE" id="Q15546"/>
<dbReference type="PaxDb" id="9606-ENSP00000262065"/>
<dbReference type="PeptideAtlas" id="Q15546"/>
<dbReference type="ProteomicsDB" id="60628"/>
<dbReference type="Antibodypedia" id="52797">
    <property type="antibodies" value="8 antibodies from 6 providers"/>
</dbReference>
<dbReference type="DNASU" id="23531"/>
<dbReference type="Ensembl" id="ENST00000262065.8">
    <property type="protein sequence ID" value="ENSP00000262065.3"/>
    <property type="gene ID" value="ENSG00000108960.9"/>
</dbReference>
<dbReference type="GeneID" id="23531"/>
<dbReference type="KEGG" id="hsa:23531"/>
<dbReference type="MANE-Select" id="ENST00000262065.8">
    <property type="protein sequence ID" value="ENSP00000262065.3"/>
    <property type="RefSeq nucleotide sequence ID" value="NM_012329.3"/>
    <property type="RefSeq protein sequence ID" value="NP_036461.2"/>
</dbReference>
<dbReference type="UCSC" id="uc002iui.4">
    <property type="organism name" value="human"/>
</dbReference>
<dbReference type="AGR" id="HGNC:7153"/>
<dbReference type="CTD" id="23531"/>
<dbReference type="DisGeNET" id="23531"/>
<dbReference type="GeneCards" id="MMD"/>
<dbReference type="HGNC" id="HGNC:7153">
    <property type="gene designation" value="MMD"/>
</dbReference>
<dbReference type="HPA" id="ENSG00000108960">
    <property type="expression patterns" value="Group enriched (adipose tissue, brain)"/>
</dbReference>
<dbReference type="MIM" id="604467">
    <property type="type" value="gene"/>
</dbReference>
<dbReference type="neXtProt" id="NX_Q15546"/>
<dbReference type="OpenTargets" id="ENSG00000108960"/>
<dbReference type="PharmGKB" id="PA30863"/>
<dbReference type="VEuPathDB" id="HostDB:ENSG00000108960"/>
<dbReference type="eggNOG" id="KOG4243">
    <property type="taxonomic scope" value="Eukaryota"/>
</dbReference>
<dbReference type="GeneTree" id="ENSGT00940000157428"/>
<dbReference type="HOGENOM" id="CLU_051078_0_0_1"/>
<dbReference type="InParanoid" id="Q15546"/>
<dbReference type="OMA" id="NAWTHLV"/>
<dbReference type="OrthoDB" id="186812at2759"/>
<dbReference type="PAN-GO" id="Q15546">
    <property type="GO annotations" value="0 GO annotations based on evolutionary models"/>
</dbReference>
<dbReference type="PhylomeDB" id="Q15546"/>
<dbReference type="TreeFam" id="TF313370"/>
<dbReference type="PathwayCommons" id="Q15546"/>
<dbReference type="SignaLink" id="Q15546"/>
<dbReference type="BioGRID-ORCS" id="23531">
    <property type="hits" value="47 hits in 1174 CRISPR screens"/>
</dbReference>
<dbReference type="GenomeRNAi" id="23531"/>
<dbReference type="Pharos" id="Q15546">
    <property type="development level" value="Tbio"/>
</dbReference>
<dbReference type="PRO" id="PR:Q15546"/>
<dbReference type="Proteomes" id="UP000005640">
    <property type="component" value="Chromosome 17"/>
</dbReference>
<dbReference type="RNAct" id="Q15546">
    <property type="molecule type" value="protein"/>
</dbReference>
<dbReference type="Bgee" id="ENSG00000108960">
    <property type="expression patterns" value="Expressed in nucleus accumbens and 207 other cell types or tissues"/>
</dbReference>
<dbReference type="ExpressionAtlas" id="Q15546">
    <property type="expression patterns" value="baseline and differential"/>
</dbReference>
<dbReference type="GO" id="GO:0005794">
    <property type="term" value="C:Golgi apparatus"/>
    <property type="evidence" value="ECO:0000314"/>
    <property type="project" value="CACAO"/>
</dbReference>
<dbReference type="GO" id="GO:0031902">
    <property type="term" value="C:late endosome membrane"/>
    <property type="evidence" value="ECO:0007669"/>
    <property type="project" value="UniProtKB-SubCell"/>
</dbReference>
<dbReference type="GO" id="GO:0005765">
    <property type="term" value="C:lysosomal membrane"/>
    <property type="evidence" value="ECO:0007669"/>
    <property type="project" value="UniProtKB-SubCell"/>
</dbReference>
<dbReference type="GO" id="GO:0016020">
    <property type="term" value="C:membrane"/>
    <property type="evidence" value="ECO:0000304"/>
    <property type="project" value="ProtInc"/>
</dbReference>
<dbReference type="GO" id="GO:0005886">
    <property type="term" value="C:plasma membrane"/>
    <property type="evidence" value="ECO:0000304"/>
    <property type="project" value="ProtInc"/>
</dbReference>
<dbReference type="GO" id="GO:0140911">
    <property type="term" value="F:pore-forming activity"/>
    <property type="evidence" value="ECO:0007669"/>
    <property type="project" value="InterPro"/>
</dbReference>
<dbReference type="GO" id="GO:0004672">
    <property type="term" value="F:protein kinase activity"/>
    <property type="evidence" value="ECO:0000314"/>
    <property type="project" value="CACAO"/>
</dbReference>
<dbReference type="GO" id="GO:0038023">
    <property type="term" value="F:signaling receptor activity"/>
    <property type="evidence" value="ECO:0000304"/>
    <property type="project" value="ProtInc"/>
</dbReference>
<dbReference type="GO" id="GO:0045666">
    <property type="term" value="P:positive regulation of neuron differentiation"/>
    <property type="evidence" value="ECO:0000314"/>
    <property type="project" value="CACAO"/>
</dbReference>
<dbReference type="GO" id="GO:0045860">
    <property type="term" value="P:positive regulation of protein kinase activity"/>
    <property type="evidence" value="ECO:0000314"/>
    <property type="project" value="CACAO"/>
</dbReference>
<dbReference type="GO" id="GO:0032880">
    <property type="term" value="P:regulation of protein localization"/>
    <property type="evidence" value="ECO:0000314"/>
    <property type="project" value="CACAO"/>
</dbReference>
<dbReference type="InterPro" id="IPR004254">
    <property type="entry name" value="AdipoR/HlyIII-related"/>
</dbReference>
<dbReference type="InterPro" id="IPR005744">
    <property type="entry name" value="Hy-lIII"/>
</dbReference>
<dbReference type="NCBIfam" id="TIGR01065">
    <property type="entry name" value="hlyIII"/>
    <property type="match status" value="1"/>
</dbReference>
<dbReference type="PANTHER" id="PTHR20855">
    <property type="entry name" value="ADIPOR/PROGESTIN RECEPTOR-RELATED"/>
    <property type="match status" value="1"/>
</dbReference>
<dbReference type="PANTHER" id="PTHR20855:SF26">
    <property type="entry name" value="MONOCYTE TO MACROPHAGE DIFFERENTIATION FACTOR"/>
    <property type="match status" value="1"/>
</dbReference>
<dbReference type="Pfam" id="PF03006">
    <property type="entry name" value="HlyIII"/>
    <property type="match status" value="1"/>
</dbReference>
<protein>
    <recommendedName>
        <fullName evidence="5">Monocyte to macrophage differentiation factor</fullName>
    </recommendedName>
    <alternativeName>
        <fullName evidence="4">Progestin and adipoQ receptor family member 11</fullName>
    </alternativeName>
    <alternativeName>
        <fullName>Progestin and adipoQ receptor family member XI</fullName>
    </alternativeName>
</protein>
<accession>Q15546</accession>
<accession>B2R6X9</accession>
<accession>D3DTY6</accession>
<accession>Q8TAN7</accession>
<comment type="function">
    <text evidence="1">Involved in the dynamics of lysosomal membranes associated with microglial activation following brain lesion.</text>
</comment>
<comment type="interaction">
    <interactant intactId="EBI-17873222">
        <id>Q15546</id>
    </interactant>
    <interactant intactId="EBI-11522760">
        <id>Q6RW13-2</id>
        <label>AGTRAP</label>
    </interactant>
    <organismsDiffer>false</organismsDiffer>
    <experiments>3</experiments>
</comment>
<comment type="interaction">
    <interactant intactId="EBI-17873222">
        <id>Q15546</id>
    </interactant>
    <interactant intactId="EBI-11343438">
        <id>Q3SXY8</id>
        <label>ARL13B</label>
    </interactant>
    <organismsDiffer>false</organismsDiffer>
    <experiments>3</experiments>
</comment>
<comment type="interaction">
    <interactant intactId="EBI-17873222">
        <id>Q15546</id>
    </interactant>
    <interactant intactId="EBI-12069500">
        <id>Q9HD20-3</id>
        <label>ATP13A1</label>
    </interactant>
    <organismsDiffer>false</organismsDiffer>
    <experiments>3</experiments>
</comment>
<comment type="interaction">
    <interactant intactId="EBI-17873222">
        <id>Q15546</id>
    </interactant>
    <interactant intactId="EBI-12003442">
        <id>Q8WVX3-2</id>
        <label>C4orf3</label>
    </interactant>
    <organismsDiffer>false</organismsDiffer>
    <experiments>3</experiments>
</comment>
<comment type="interaction">
    <interactant intactId="EBI-17873222">
        <id>Q15546</id>
    </interactant>
    <interactant intactId="EBI-1752413">
        <id>P78329</id>
        <label>CYP4F2</label>
    </interactant>
    <organismsDiffer>false</organismsDiffer>
    <experiments>3</experiments>
</comment>
<comment type="interaction">
    <interactant intactId="EBI-17873222">
        <id>Q15546</id>
    </interactant>
    <interactant intactId="EBI-2820492">
        <id>Q9BV81</id>
        <label>EMC6</label>
    </interactant>
    <organismsDiffer>false</organismsDiffer>
    <experiments>3</experiments>
</comment>
<comment type="interaction">
    <interactant intactId="EBI-17873222">
        <id>Q15546</id>
    </interactant>
    <interactant intactId="EBI-18304435">
        <id>Q5JX71</id>
        <label>FAM209A</label>
    </interactant>
    <organismsDiffer>false</organismsDiffer>
    <experiments>3</experiments>
</comment>
<comment type="interaction">
    <interactant intactId="EBI-17873222">
        <id>Q15546</id>
    </interactant>
    <interactant intactId="EBI-3436637">
        <id>P01350</id>
        <label>GAST</label>
    </interactant>
    <organismsDiffer>false</organismsDiffer>
    <experiments>3</experiments>
</comment>
<comment type="interaction">
    <interactant intactId="EBI-17873222">
        <id>Q15546</id>
    </interactant>
    <interactant intactId="EBI-13345167">
        <id>Q8TDT2</id>
        <label>GPR152</label>
    </interactant>
    <organismsDiffer>false</organismsDiffer>
    <experiments>3</experiments>
</comment>
<comment type="interaction">
    <interactant intactId="EBI-17873222">
        <id>Q15546</id>
    </interactant>
    <interactant intactId="EBI-11721746">
        <id>Q8TED1</id>
        <label>GPX8</label>
    </interactant>
    <organismsDiffer>false</organismsDiffer>
    <experiments>3</experiments>
</comment>
<comment type="interaction">
    <interactant intactId="EBI-17873222">
        <id>Q15546</id>
    </interactant>
    <interactant intactId="EBI-2808234">
        <id>P11836</id>
        <label>MS4A1</label>
    </interactant>
    <organismsDiffer>false</organismsDiffer>
    <experiments>3</experiments>
</comment>
<comment type="interaction">
    <interactant intactId="EBI-17873222">
        <id>Q15546</id>
    </interactant>
    <interactant intactId="EBI-2683029">
        <id>Q9NX40</id>
        <label>OCIAD1</label>
    </interactant>
    <organismsDiffer>false</organismsDiffer>
    <experiments>3</experiments>
</comment>
<comment type="interaction">
    <interactant intactId="EBI-17873222">
        <id>Q15546</id>
    </interactant>
    <interactant intactId="EBI-949945">
        <id>Q53GL0</id>
        <label>PLEKHO1</label>
    </interactant>
    <organismsDiffer>false</organismsDiffer>
    <experiments>3</experiments>
</comment>
<comment type="interaction">
    <interactant intactId="EBI-17873222">
        <id>Q15546</id>
    </interactant>
    <interactant intactId="EBI-9679163">
        <id>Q9Y6D0</id>
        <label>SELENOK</label>
    </interactant>
    <organismsDiffer>false</organismsDiffer>
    <experiments>3</experiments>
</comment>
<comment type="interaction">
    <interactant intactId="EBI-17873222">
        <id>Q15546</id>
    </interactant>
    <interactant intactId="EBI-355861">
        <id>Q9H9B4</id>
        <label>SFXN1</label>
    </interactant>
    <organismsDiffer>false</organismsDiffer>
    <experiments>3</experiments>
</comment>
<comment type="interaction">
    <interactant intactId="EBI-17873222">
        <id>Q15546</id>
    </interactant>
    <interactant intactId="EBI-12274070">
        <id>Q969S6</id>
        <label>TMEM203</label>
    </interactant>
    <organismsDiffer>false</organismsDiffer>
    <experiments>3</experiments>
</comment>
<comment type="interaction">
    <interactant intactId="EBI-17873222">
        <id>Q15546</id>
    </interactant>
    <interactant intactId="EBI-12038591">
        <id>Q69YG0</id>
        <label>TMEM42</label>
    </interactant>
    <organismsDiffer>false</organismsDiffer>
    <experiments>3</experiments>
</comment>
<comment type="interaction">
    <interactant intactId="EBI-17873222">
        <id>Q15546</id>
    </interactant>
    <interactant intactId="EBI-2852148">
        <id>Q9H2L4</id>
        <label>TMEM60</label>
    </interactant>
    <organismsDiffer>false</organismsDiffer>
    <experiments>3</experiments>
</comment>
<comment type="interaction">
    <interactant intactId="EBI-17873222">
        <id>Q15546</id>
    </interactant>
    <interactant intactId="EBI-751210">
        <id>Q96EC8</id>
        <label>YIPF6</label>
    </interactant>
    <organismsDiffer>false</organismsDiffer>
    <experiments>3</experiments>
</comment>
<comment type="subcellular location">
    <subcellularLocation>
        <location evidence="1">Late endosome membrane</location>
        <topology evidence="1">Multi-pass membrane protein</topology>
    </subcellularLocation>
    <subcellularLocation>
        <location evidence="1">Lysosome membrane</location>
        <topology evidence="1">Multi-pass membrane protein</topology>
    </subcellularLocation>
</comment>
<comment type="tissue specificity">
    <text evidence="3">Exhibits relatively ubiquitous expression with preferential expression in mature (in vitro differentiated) macrophages.</text>
</comment>
<comment type="similarity">
    <text evidence="6">Belongs to the ADIPOR family.</text>
</comment>
<name>PAQRB_HUMAN</name>
<proteinExistence type="evidence at protein level"/>
<sequence>MRFKNRFQRFMNHRAPANGRYKPTCYEHAANCYTHAFLIVPAIVGSALLHRLSDDCWEKITAWIYGMGLCALFIVSTVFHIVSWKKSHLRTVEHCFHMCDRMVIYFFIAASYAPWLNLRELGPLASHMRWFIWLMAAGGTIYVFLYHEKYKVVELFFYLTMGFSPALVVTSMNNTDGLQELACGGLIYCLGVVFFKSDGIIPFAHAIWHLFVATAAAVHYYAIWKYLYRSPTDFMRHL</sequence>